<dbReference type="EC" id="3.5.1.108" evidence="1"/>
<dbReference type="EMBL" id="CR628336">
    <property type="protein sequence ID" value="CAH13814.1"/>
    <property type="molecule type" value="Genomic_DNA"/>
</dbReference>
<dbReference type="RefSeq" id="WP_010948308.1">
    <property type="nucleotide sequence ID" value="NC_006368.1"/>
</dbReference>
<dbReference type="SMR" id="Q5X1T2"/>
<dbReference type="GeneID" id="57036607"/>
<dbReference type="KEGG" id="lpp:lpp2661"/>
<dbReference type="LegioList" id="lpp2661"/>
<dbReference type="HOGENOM" id="CLU_046528_1_0_6"/>
<dbReference type="UniPathway" id="UPA00359">
    <property type="reaction ID" value="UER00478"/>
</dbReference>
<dbReference type="GO" id="GO:0016020">
    <property type="term" value="C:membrane"/>
    <property type="evidence" value="ECO:0007669"/>
    <property type="project" value="GOC"/>
</dbReference>
<dbReference type="GO" id="GO:0046872">
    <property type="term" value="F:metal ion binding"/>
    <property type="evidence" value="ECO:0007669"/>
    <property type="project" value="UniProtKB-KW"/>
</dbReference>
<dbReference type="GO" id="GO:0103117">
    <property type="term" value="F:UDP-3-O-acyl-N-acetylglucosamine deacetylase activity"/>
    <property type="evidence" value="ECO:0007669"/>
    <property type="project" value="UniProtKB-UniRule"/>
</dbReference>
<dbReference type="GO" id="GO:0009245">
    <property type="term" value="P:lipid A biosynthetic process"/>
    <property type="evidence" value="ECO:0007669"/>
    <property type="project" value="UniProtKB-UniRule"/>
</dbReference>
<dbReference type="Gene3D" id="3.30.230.20">
    <property type="entry name" value="lpxc deacetylase, domain 1"/>
    <property type="match status" value="1"/>
</dbReference>
<dbReference type="Gene3D" id="3.30.1700.10">
    <property type="entry name" value="lpxc deacetylase, domain 2"/>
    <property type="match status" value="1"/>
</dbReference>
<dbReference type="HAMAP" id="MF_00388">
    <property type="entry name" value="LpxC"/>
    <property type="match status" value="1"/>
</dbReference>
<dbReference type="InterPro" id="IPR020568">
    <property type="entry name" value="Ribosomal_Su5_D2-typ_SF"/>
</dbReference>
<dbReference type="InterPro" id="IPR004463">
    <property type="entry name" value="UDP-acyl_GlcNac_deAcase"/>
</dbReference>
<dbReference type="InterPro" id="IPR011334">
    <property type="entry name" value="UDP-acyl_GlcNac_deAcase_C"/>
</dbReference>
<dbReference type="InterPro" id="IPR015870">
    <property type="entry name" value="UDP-acyl_N-AcGlcN_deAcase_N"/>
</dbReference>
<dbReference type="NCBIfam" id="TIGR00325">
    <property type="entry name" value="lpxC"/>
    <property type="match status" value="1"/>
</dbReference>
<dbReference type="PANTHER" id="PTHR33694">
    <property type="entry name" value="UDP-3-O-ACYL-N-ACETYLGLUCOSAMINE DEACETYLASE 1, MITOCHONDRIAL-RELATED"/>
    <property type="match status" value="1"/>
</dbReference>
<dbReference type="PANTHER" id="PTHR33694:SF1">
    <property type="entry name" value="UDP-3-O-ACYL-N-ACETYLGLUCOSAMINE DEACETYLASE 1, MITOCHONDRIAL-RELATED"/>
    <property type="match status" value="1"/>
</dbReference>
<dbReference type="Pfam" id="PF03331">
    <property type="entry name" value="LpxC"/>
    <property type="match status" value="1"/>
</dbReference>
<dbReference type="SUPFAM" id="SSF54211">
    <property type="entry name" value="Ribosomal protein S5 domain 2-like"/>
    <property type="match status" value="2"/>
</dbReference>
<organism>
    <name type="scientific">Legionella pneumophila (strain Paris)</name>
    <dbReference type="NCBI Taxonomy" id="297246"/>
    <lineage>
        <taxon>Bacteria</taxon>
        <taxon>Pseudomonadati</taxon>
        <taxon>Pseudomonadota</taxon>
        <taxon>Gammaproteobacteria</taxon>
        <taxon>Legionellales</taxon>
        <taxon>Legionellaceae</taxon>
        <taxon>Legionella</taxon>
    </lineage>
</organism>
<feature type="chain" id="PRO_0000253673" description="UDP-3-O-acyl-N-acetylglucosamine deacetylase">
    <location>
        <begin position="1"/>
        <end position="304"/>
    </location>
</feature>
<feature type="active site" description="Proton donor" evidence="1">
    <location>
        <position position="264"/>
    </location>
</feature>
<feature type="binding site" evidence="1">
    <location>
        <position position="78"/>
    </location>
    <ligand>
        <name>Zn(2+)</name>
        <dbReference type="ChEBI" id="CHEBI:29105"/>
    </ligand>
</feature>
<feature type="binding site" evidence="1">
    <location>
        <position position="237"/>
    </location>
    <ligand>
        <name>Zn(2+)</name>
        <dbReference type="ChEBI" id="CHEBI:29105"/>
    </ligand>
</feature>
<feature type="binding site" evidence="1">
    <location>
        <position position="241"/>
    </location>
    <ligand>
        <name>Zn(2+)</name>
        <dbReference type="ChEBI" id="CHEBI:29105"/>
    </ligand>
</feature>
<name>LPXC_LEGPA</name>
<gene>
    <name evidence="1" type="primary">lpxC</name>
    <name type="ordered locus">lpp2661</name>
</gene>
<proteinExistence type="inferred from homology"/>
<sequence>MIKQRTPKKVIQATGVGLHSGEKVLLTLRPAPVNTGIVFRRVDLSPVVEIPASYEYVGDTMLCTTLHHGKVKIATVEHLLSALAGLGIDNAYIDVNAPEIPIMDGSAAPFVFLIQSAGIREQNAAKRYIRILKPIRVEENGKYVQFLPHKGYKITFTIGFEHPVFNDRPQTVSFDFSGTSYVKEVCRARTFGFLSDYEKLRECDLAKGGSLDNAIVVDDYRVLNEDGLRFESEFVTHKVLDAIGDLYLLGSSLIGAFEGYKSGHELNNRLLRELMVRQDAWEYTYFDTENYLPAVHPEYYPVEA</sequence>
<accession>Q5X1T2</accession>
<protein>
    <recommendedName>
        <fullName evidence="1">UDP-3-O-acyl-N-acetylglucosamine deacetylase</fullName>
        <shortName evidence="1">UDP-3-O-acyl-GlcNAc deacetylase</shortName>
        <ecNumber evidence="1">3.5.1.108</ecNumber>
    </recommendedName>
    <alternativeName>
        <fullName evidence="1">UDP-3-O-[R-3-hydroxymyristoyl]-N-acetylglucosamine deacetylase</fullName>
    </alternativeName>
</protein>
<reference key="1">
    <citation type="journal article" date="2004" name="Nat. Genet.">
        <title>Evidence in the Legionella pneumophila genome for exploitation of host cell functions and high genome plasticity.</title>
        <authorList>
            <person name="Cazalet C."/>
            <person name="Rusniok C."/>
            <person name="Brueggemann H."/>
            <person name="Zidane N."/>
            <person name="Magnier A."/>
            <person name="Ma L."/>
            <person name="Tichit M."/>
            <person name="Jarraud S."/>
            <person name="Bouchier C."/>
            <person name="Vandenesch F."/>
            <person name="Kunst F."/>
            <person name="Etienne J."/>
            <person name="Glaser P."/>
            <person name="Buchrieser C."/>
        </authorList>
    </citation>
    <scope>NUCLEOTIDE SEQUENCE [LARGE SCALE GENOMIC DNA]</scope>
    <source>
        <strain>Paris</strain>
    </source>
</reference>
<evidence type="ECO:0000255" key="1">
    <source>
        <dbReference type="HAMAP-Rule" id="MF_00388"/>
    </source>
</evidence>
<comment type="function">
    <text evidence="1">Catalyzes the hydrolysis of UDP-3-O-myristoyl-N-acetylglucosamine to form UDP-3-O-myristoylglucosamine and acetate, the committed step in lipid A biosynthesis.</text>
</comment>
<comment type="catalytic activity">
    <reaction evidence="1">
        <text>a UDP-3-O-[(3R)-3-hydroxyacyl]-N-acetyl-alpha-D-glucosamine + H2O = a UDP-3-O-[(3R)-3-hydroxyacyl]-alpha-D-glucosamine + acetate</text>
        <dbReference type="Rhea" id="RHEA:67816"/>
        <dbReference type="ChEBI" id="CHEBI:15377"/>
        <dbReference type="ChEBI" id="CHEBI:30089"/>
        <dbReference type="ChEBI" id="CHEBI:137740"/>
        <dbReference type="ChEBI" id="CHEBI:173225"/>
        <dbReference type="EC" id="3.5.1.108"/>
    </reaction>
</comment>
<comment type="cofactor">
    <cofactor evidence="1">
        <name>Zn(2+)</name>
        <dbReference type="ChEBI" id="CHEBI:29105"/>
    </cofactor>
</comment>
<comment type="pathway">
    <text evidence="1">Glycolipid biosynthesis; lipid IV(A) biosynthesis; lipid IV(A) from (3R)-3-hydroxytetradecanoyl-[acyl-carrier-protein] and UDP-N-acetyl-alpha-D-glucosamine: step 2/6.</text>
</comment>
<comment type="similarity">
    <text evidence="1">Belongs to the LpxC family.</text>
</comment>
<keyword id="KW-0378">Hydrolase</keyword>
<keyword id="KW-0441">Lipid A biosynthesis</keyword>
<keyword id="KW-0444">Lipid biosynthesis</keyword>
<keyword id="KW-0443">Lipid metabolism</keyword>
<keyword id="KW-0479">Metal-binding</keyword>
<keyword id="KW-0862">Zinc</keyword>